<proteinExistence type="inferred from homology"/>
<keyword id="KW-0963">Cytoplasm</keyword>
<keyword id="KW-0488">Methylation</keyword>
<keyword id="KW-0648">Protein biosynthesis</keyword>
<keyword id="KW-1185">Reference proteome</keyword>
<evidence type="ECO:0000255" key="1">
    <source>
        <dbReference type="HAMAP-Rule" id="MF_00093"/>
    </source>
</evidence>
<evidence type="ECO:0000256" key="2">
    <source>
        <dbReference type="SAM" id="MobiDB-lite"/>
    </source>
</evidence>
<accession>Q7N586</accession>
<sequence>MKPSIVAKLEALQERHEEVLAHLGDADVIADQERFRALSREYAQLTDVTNCFKAWSAVQDDLKAAEIMLDDPEMREMAQEEIRDAKVRNEELEQQLQLLLLPKDPDDERNCFLEVRAGTGGDEAAIFAGDLFRMYSRYAESRRWKVEVISANDGEHGGYKEIIAKVSGEQVYGHLKFESGGHRVQRVPETESQGRIHTSACTVAVLPEIPDAELPEISPSDLRIDTFRSSGAGGQHVNTTDSAIRITHIPTGIVVECQDERSQHKNKAKAMSVLAARIRAAEVRKRQEAEASERRNLLGSGDRSDRNRTYNFPQGRVTDHRINLTLYRLDEVIEGKLDMLVQPIVNEYQADLLSALSEQD</sequence>
<organism>
    <name type="scientific">Photorhabdus laumondii subsp. laumondii (strain DSM 15139 / CIP 105565 / TT01)</name>
    <name type="common">Photorhabdus luminescens subsp. laumondii</name>
    <dbReference type="NCBI Taxonomy" id="243265"/>
    <lineage>
        <taxon>Bacteria</taxon>
        <taxon>Pseudomonadati</taxon>
        <taxon>Pseudomonadota</taxon>
        <taxon>Gammaproteobacteria</taxon>
        <taxon>Enterobacterales</taxon>
        <taxon>Morganellaceae</taxon>
        <taxon>Photorhabdus</taxon>
    </lineage>
</organism>
<feature type="chain" id="PRO_0000177720" description="Peptide chain release factor 1">
    <location>
        <begin position="1"/>
        <end position="360"/>
    </location>
</feature>
<feature type="region of interest" description="Disordered" evidence="2">
    <location>
        <begin position="285"/>
        <end position="313"/>
    </location>
</feature>
<feature type="compositionally biased region" description="Basic and acidic residues" evidence="2">
    <location>
        <begin position="285"/>
        <end position="308"/>
    </location>
</feature>
<feature type="modified residue" description="N5-methylglutamine" evidence="1">
    <location>
        <position position="235"/>
    </location>
</feature>
<gene>
    <name evidence="1" type="primary">prfA</name>
    <name type="ordered locus">plu2070</name>
</gene>
<dbReference type="EMBL" id="BX571866">
    <property type="protein sequence ID" value="CAE14363.1"/>
    <property type="molecule type" value="Genomic_DNA"/>
</dbReference>
<dbReference type="RefSeq" id="WP_011146325.1">
    <property type="nucleotide sequence ID" value="NC_005126.1"/>
</dbReference>
<dbReference type="SMR" id="Q7N586"/>
<dbReference type="STRING" id="243265.plu2070"/>
<dbReference type="GeneID" id="48848346"/>
<dbReference type="KEGG" id="plu:plu2070"/>
<dbReference type="eggNOG" id="COG0216">
    <property type="taxonomic scope" value="Bacteria"/>
</dbReference>
<dbReference type="HOGENOM" id="CLU_036856_0_1_6"/>
<dbReference type="OrthoDB" id="9806673at2"/>
<dbReference type="Proteomes" id="UP000002514">
    <property type="component" value="Chromosome"/>
</dbReference>
<dbReference type="GO" id="GO:0005737">
    <property type="term" value="C:cytoplasm"/>
    <property type="evidence" value="ECO:0007669"/>
    <property type="project" value="UniProtKB-SubCell"/>
</dbReference>
<dbReference type="GO" id="GO:0016149">
    <property type="term" value="F:translation release factor activity, codon specific"/>
    <property type="evidence" value="ECO:0007669"/>
    <property type="project" value="UniProtKB-UniRule"/>
</dbReference>
<dbReference type="FunFam" id="3.30.160.20:FF:000004">
    <property type="entry name" value="Peptide chain release factor 1"/>
    <property type="match status" value="1"/>
</dbReference>
<dbReference type="FunFam" id="3.30.70.1660:FF:000002">
    <property type="entry name" value="Peptide chain release factor 1"/>
    <property type="match status" value="1"/>
</dbReference>
<dbReference type="FunFam" id="3.30.70.1660:FF:000004">
    <property type="entry name" value="Peptide chain release factor 1"/>
    <property type="match status" value="1"/>
</dbReference>
<dbReference type="Gene3D" id="3.30.160.20">
    <property type="match status" value="1"/>
</dbReference>
<dbReference type="Gene3D" id="3.30.70.1660">
    <property type="match status" value="1"/>
</dbReference>
<dbReference type="Gene3D" id="6.10.140.1950">
    <property type="match status" value="1"/>
</dbReference>
<dbReference type="HAMAP" id="MF_00093">
    <property type="entry name" value="Rel_fac_1"/>
    <property type="match status" value="1"/>
</dbReference>
<dbReference type="InterPro" id="IPR005139">
    <property type="entry name" value="PCRF"/>
</dbReference>
<dbReference type="InterPro" id="IPR000352">
    <property type="entry name" value="Pep_chain_release_fac_I"/>
</dbReference>
<dbReference type="InterPro" id="IPR045853">
    <property type="entry name" value="Pep_chain_release_fac_I_sf"/>
</dbReference>
<dbReference type="InterPro" id="IPR050057">
    <property type="entry name" value="Prokaryotic/Mito_RF"/>
</dbReference>
<dbReference type="InterPro" id="IPR004373">
    <property type="entry name" value="RF-1"/>
</dbReference>
<dbReference type="NCBIfam" id="TIGR00019">
    <property type="entry name" value="prfA"/>
    <property type="match status" value="1"/>
</dbReference>
<dbReference type="NCBIfam" id="NF001859">
    <property type="entry name" value="PRK00591.1"/>
    <property type="match status" value="1"/>
</dbReference>
<dbReference type="PANTHER" id="PTHR43804">
    <property type="entry name" value="LD18447P"/>
    <property type="match status" value="1"/>
</dbReference>
<dbReference type="PANTHER" id="PTHR43804:SF7">
    <property type="entry name" value="LD18447P"/>
    <property type="match status" value="1"/>
</dbReference>
<dbReference type="Pfam" id="PF03462">
    <property type="entry name" value="PCRF"/>
    <property type="match status" value="1"/>
</dbReference>
<dbReference type="Pfam" id="PF00472">
    <property type="entry name" value="RF-1"/>
    <property type="match status" value="1"/>
</dbReference>
<dbReference type="SMART" id="SM00937">
    <property type="entry name" value="PCRF"/>
    <property type="match status" value="1"/>
</dbReference>
<dbReference type="SUPFAM" id="SSF75620">
    <property type="entry name" value="Release factor"/>
    <property type="match status" value="1"/>
</dbReference>
<dbReference type="PROSITE" id="PS00745">
    <property type="entry name" value="RF_PROK_I"/>
    <property type="match status" value="1"/>
</dbReference>
<comment type="function">
    <text evidence="1">Peptide chain release factor 1 directs the termination of translation in response to the peptide chain termination codons UAG and UAA.</text>
</comment>
<comment type="subcellular location">
    <subcellularLocation>
        <location evidence="1">Cytoplasm</location>
    </subcellularLocation>
</comment>
<comment type="PTM">
    <text evidence="1">Methylated by PrmC. Methylation increases the termination efficiency of RF1.</text>
</comment>
<comment type="similarity">
    <text evidence="1">Belongs to the prokaryotic/mitochondrial release factor family.</text>
</comment>
<protein>
    <recommendedName>
        <fullName evidence="1">Peptide chain release factor 1</fullName>
        <shortName evidence="1">RF-1</shortName>
    </recommendedName>
</protein>
<name>RF1_PHOLL</name>
<reference key="1">
    <citation type="journal article" date="2003" name="Nat. Biotechnol.">
        <title>The genome sequence of the entomopathogenic bacterium Photorhabdus luminescens.</title>
        <authorList>
            <person name="Duchaud E."/>
            <person name="Rusniok C."/>
            <person name="Frangeul L."/>
            <person name="Buchrieser C."/>
            <person name="Givaudan A."/>
            <person name="Taourit S."/>
            <person name="Bocs S."/>
            <person name="Boursaux-Eude C."/>
            <person name="Chandler M."/>
            <person name="Charles J.-F."/>
            <person name="Dassa E."/>
            <person name="Derose R."/>
            <person name="Derzelle S."/>
            <person name="Freyssinet G."/>
            <person name="Gaudriault S."/>
            <person name="Medigue C."/>
            <person name="Lanois A."/>
            <person name="Powell K."/>
            <person name="Siguier P."/>
            <person name="Vincent R."/>
            <person name="Wingate V."/>
            <person name="Zouine M."/>
            <person name="Glaser P."/>
            <person name="Boemare N."/>
            <person name="Danchin A."/>
            <person name="Kunst F."/>
        </authorList>
    </citation>
    <scope>NUCLEOTIDE SEQUENCE [LARGE SCALE GENOMIC DNA]</scope>
    <source>
        <strain>DSM 15139 / CIP 105565 / TT01</strain>
    </source>
</reference>